<organism>
    <name type="scientific">Aliivibrio salmonicida (strain LFI1238)</name>
    <name type="common">Vibrio salmonicida (strain LFI1238)</name>
    <dbReference type="NCBI Taxonomy" id="316275"/>
    <lineage>
        <taxon>Bacteria</taxon>
        <taxon>Pseudomonadati</taxon>
        <taxon>Pseudomonadota</taxon>
        <taxon>Gammaproteobacteria</taxon>
        <taxon>Vibrionales</taxon>
        <taxon>Vibrionaceae</taxon>
        <taxon>Aliivibrio</taxon>
    </lineage>
</organism>
<protein>
    <recommendedName>
        <fullName evidence="1">GMP synthase [glutamine-hydrolyzing]</fullName>
        <ecNumber evidence="1">6.3.5.2</ecNumber>
    </recommendedName>
    <alternativeName>
        <fullName evidence="1">GMP synthetase</fullName>
    </alternativeName>
    <alternativeName>
        <fullName evidence="1">Glutamine amidotransferase</fullName>
    </alternativeName>
</protein>
<comment type="function">
    <text evidence="1">Catalyzes the synthesis of GMP from XMP.</text>
</comment>
<comment type="catalytic activity">
    <reaction evidence="1">
        <text>XMP + L-glutamine + ATP + H2O = GMP + L-glutamate + AMP + diphosphate + 2 H(+)</text>
        <dbReference type="Rhea" id="RHEA:11680"/>
        <dbReference type="ChEBI" id="CHEBI:15377"/>
        <dbReference type="ChEBI" id="CHEBI:15378"/>
        <dbReference type="ChEBI" id="CHEBI:29985"/>
        <dbReference type="ChEBI" id="CHEBI:30616"/>
        <dbReference type="ChEBI" id="CHEBI:33019"/>
        <dbReference type="ChEBI" id="CHEBI:57464"/>
        <dbReference type="ChEBI" id="CHEBI:58115"/>
        <dbReference type="ChEBI" id="CHEBI:58359"/>
        <dbReference type="ChEBI" id="CHEBI:456215"/>
        <dbReference type="EC" id="6.3.5.2"/>
    </reaction>
</comment>
<comment type="pathway">
    <text evidence="1">Purine metabolism; GMP biosynthesis; GMP from XMP (L-Gln route): step 1/1.</text>
</comment>
<comment type="subunit">
    <text evidence="1">Homodimer.</text>
</comment>
<keyword id="KW-0067">ATP-binding</keyword>
<keyword id="KW-0315">Glutamine amidotransferase</keyword>
<keyword id="KW-0332">GMP biosynthesis</keyword>
<keyword id="KW-0436">Ligase</keyword>
<keyword id="KW-0547">Nucleotide-binding</keyword>
<keyword id="KW-0658">Purine biosynthesis</keyword>
<dbReference type="EC" id="6.3.5.2" evidence="1"/>
<dbReference type="EMBL" id="FM178379">
    <property type="protein sequence ID" value="CAQ78423.1"/>
    <property type="molecule type" value="Genomic_DNA"/>
</dbReference>
<dbReference type="RefSeq" id="WP_012549543.1">
    <property type="nucleotide sequence ID" value="NC_011312.1"/>
</dbReference>
<dbReference type="SMR" id="B6EGZ6"/>
<dbReference type="MEROPS" id="C26.957"/>
<dbReference type="KEGG" id="vsa:VSAL_I0738"/>
<dbReference type="eggNOG" id="COG0518">
    <property type="taxonomic scope" value="Bacteria"/>
</dbReference>
<dbReference type="eggNOG" id="COG0519">
    <property type="taxonomic scope" value="Bacteria"/>
</dbReference>
<dbReference type="HOGENOM" id="CLU_014340_0_5_6"/>
<dbReference type="UniPathway" id="UPA00189">
    <property type="reaction ID" value="UER00296"/>
</dbReference>
<dbReference type="Proteomes" id="UP000001730">
    <property type="component" value="Chromosome 1"/>
</dbReference>
<dbReference type="GO" id="GO:0005829">
    <property type="term" value="C:cytosol"/>
    <property type="evidence" value="ECO:0007669"/>
    <property type="project" value="TreeGrafter"/>
</dbReference>
<dbReference type="GO" id="GO:0005524">
    <property type="term" value="F:ATP binding"/>
    <property type="evidence" value="ECO:0007669"/>
    <property type="project" value="UniProtKB-UniRule"/>
</dbReference>
<dbReference type="GO" id="GO:0003921">
    <property type="term" value="F:GMP synthase activity"/>
    <property type="evidence" value="ECO:0007669"/>
    <property type="project" value="InterPro"/>
</dbReference>
<dbReference type="CDD" id="cd01742">
    <property type="entry name" value="GATase1_GMP_Synthase"/>
    <property type="match status" value="1"/>
</dbReference>
<dbReference type="CDD" id="cd01997">
    <property type="entry name" value="GMP_synthase_C"/>
    <property type="match status" value="1"/>
</dbReference>
<dbReference type="FunFam" id="3.30.300.10:FF:000002">
    <property type="entry name" value="GMP synthase [glutamine-hydrolyzing]"/>
    <property type="match status" value="1"/>
</dbReference>
<dbReference type="FunFam" id="3.40.50.620:FF:000001">
    <property type="entry name" value="GMP synthase [glutamine-hydrolyzing]"/>
    <property type="match status" value="1"/>
</dbReference>
<dbReference type="FunFam" id="3.40.50.880:FF:000001">
    <property type="entry name" value="GMP synthase [glutamine-hydrolyzing]"/>
    <property type="match status" value="1"/>
</dbReference>
<dbReference type="Gene3D" id="3.30.300.10">
    <property type="match status" value="1"/>
</dbReference>
<dbReference type="Gene3D" id="3.40.50.880">
    <property type="match status" value="1"/>
</dbReference>
<dbReference type="Gene3D" id="3.40.50.620">
    <property type="entry name" value="HUPs"/>
    <property type="match status" value="1"/>
</dbReference>
<dbReference type="HAMAP" id="MF_00344">
    <property type="entry name" value="GMP_synthase"/>
    <property type="match status" value="1"/>
</dbReference>
<dbReference type="InterPro" id="IPR029062">
    <property type="entry name" value="Class_I_gatase-like"/>
</dbReference>
<dbReference type="InterPro" id="IPR017926">
    <property type="entry name" value="GATASE"/>
</dbReference>
<dbReference type="InterPro" id="IPR001674">
    <property type="entry name" value="GMP_synth_C"/>
</dbReference>
<dbReference type="InterPro" id="IPR004739">
    <property type="entry name" value="GMP_synth_GATase"/>
</dbReference>
<dbReference type="InterPro" id="IPR022955">
    <property type="entry name" value="GMP_synthase"/>
</dbReference>
<dbReference type="InterPro" id="IPR025777">
    <property type="entry name" value="GMPS_ATP_PPase_dom"/>
</dbReference>
<dbReference type="InterPro" id="IPR022310">
    <property type="entry name" value="NAD/GMP_synthase"/>
</dbReference>
<dbReference type="InterPro" id="IPR014729">
    <property type="entry name" value="Rossmann-like_a/b/a_fold"/>
</dbReference>
<dbReference type="NCBIfam" id="TIGR00884">
    <property type="entry name" value="guaA_Cterm"/>
    <property type="match status" value="1"/>
</dbReference>
<dbReference type="NCBIfam" id="TIGR00888">
    <property type="entry name" value="guaA_Nterm"/>
    <property type="match status" value="1"/>
</dbReference>
<dbReference type="NCBIfam" id="NF000848">
    <property type="entry name" value="PRK00074.1"/>
    <property type="match status" value="1"/>
</dbReference>
<dbReference type="PANTHER" id="PTHR11922:SF2">
    <property type="entry name" value="GMP SYNTHASE [GLUTAMINE-HYDROLYZING]"/>
    <property type="match status" value="1"/>
</dbReference>
<dbReference type="PANTHER" id="PTHR11922">
    <property type="entry name" value="GMP SYNTHASE-RELATED"/>
    <property type="match status" value="1"/>
</dbReference>
<dbReference type="Pfam" id="PF00117">
    <property type="entry name" value="GATase"/>
    <property type="match status" value="1"/>
</dbReference>
<dbReference type="Pfam" id="PF00958">
    <property type="entry name" value="GMP_synt_C"/>
    <property type="match status" value="1"/>
</dbReference>
<dbReference type="Pfam" id="PF02540">
    <property type="entry name" value="NAD_synthase"/>
    <property type="match status" value="1"/>
</dbReference>
<dbReference type="PRINTS" id="PR00097">
    <property type="entry name" value="ANTSNTHASEII"/>
</dbReference>
<dbReference type="PRINTS" id="PR00099">
    <property type="entry name" value="CPSGATASE"/>
</dbReference>
<dbReference type="PRINTS" id="PR00096">
    <property type="entry name" value="GATASE"/>
</dbReference>
<dbReference type="SUPFAM" id="SSF52402">
    <property type="entry name" value="Adenine nucleotide alpha hydrolases-like"/>
    <property type="match status" value="1"/>
</dbReference>
<dbReference type="SUPFAM" id="SSF52317">
    <property type="entry name" value="Class I glutamine amidotransferase-like"/>
    <property type="match status" value="1"/>
</dbReference>
<dbReference type="SUPFAM" id="SSF54810">
    <property type="entry name" value="GMP synthetase C-terminal dimerisation domain"/>
    <property type="match status" value="1"/>
</dbReference>
<dbReference type="PROSITE" id="PS51273">
    <property type="entry name" value="GATASE_TYPE_1"/>
    <property type="match status" value="1"/>
</dbReference>
<dbReference type="PROSITE" id="PS51553">
    <property type="entry name" value="GMPS_ATP_PPASE"/>
    <property type="match status" value="1"/>
</dbReference>
<gene>
    <name evidence="1" type="primary">guaA</name>
    <name type="ordered locus">VSAL_I0738</name>
</gene>
<sequence>MTTNIHAQRILILDFGSQYTQLVARRIREIGVYCELWSWDVEESDIRDFNPDGIILSGGPESVTEANSPRAPQYVFDSGVPVFGVCYGMQTMAEQLGGKVATSTEREFGYAAVQVTGESALFKDLEATQDVWMSHGDKVVEIPSDFVKIAETETCPYAAMANEEKKYYGVQFHPEVTHTKNGLKMLENFVLNVCGCEGLWTSASIIEDAIARIKEQVGDDEVILGLSGGVDSSVVAMLAHRAIGDKLTCVFVDNGLLRLNEAEQVMEMFSEGFGLKIIHVEAEERFLSALSGESDPEAKRKIIGHVFVDIFDEESKKLSNAKWLAQGTIYPDVIESAASKTGKAHVIKSHHNVGGLPDDMEMGLVEPLRELFKDEVRKIGLELGLPYNMLYRHPFPGPGLGVRVLGEVKKEYCDLLRRADAIFIEELHNADLYNKVSQAFTVFLPVRSVGVMGDGRKYDWVVSLRAVETIDFMTAHWAHLPYDFLGKVSNRIINEVGGISRVVYDISGKPPATIEWE</sequence>
<reference key="1">
    <citation type="journal article" date="2008" name="BMC Genomics">
        <title>The genome sequence of the fish pathogen Aliivibrio salmonicida strain LFI1238 shows extensive evidence of gene decay.</title>
        <authorList>
            <person name="Hjerde E."/>
            <person name="Lorentzen M.S."/>
            <person name="Holden M.T."/>
            <person name="Seeger K."/>
            <person name="Paulsen S."/>
            <person name="Bason N."/>
            <person name="Churcher C."/>
            <person name="Harris D."/>
            <person name="Norbertczak H."/>
            <person name="Quail M.A."/>
            <person name="Sanders S."/>
            <person name="Thurston S."/>
            <person name="Parkhill J."/>
            <person name="Willassen N.P."/>
            <person name="Thomson N.R."/>
        </authorList>
    </citation>
    <scope>NUCLEOTIDE SEQUENCE [LARGE SCALE GENOMIC DNA]</scope>
    <source>
        <strain>LFI1238</strain>
    </source>
</reference>
<accession>B6EGZ6</accession>
<evidence type="ECO:0000255" key="1">
    <source>
        <dbReference type="HAMAP-Rule" id="MF_00344"/>
    </source>
</evidence>
<feature type="chain" id="PRO_1000120207" description="GMP synthase [glutamine-hydrolyzing]">
    <location>
        <begin position="1"/>
        <end position="517"/>
    </location>
</feature>
<feature type="domain" description="Glutamine amidotransferase type-1" evidence="1">
    <location>
        <begin position="9"/>
        <end position="199"/>
    </location>
</feature>
<feature type="domain" description="GMPS ATP-PPase" evidence="1">
    <location>
        <begin position="200"/>
        <end position="392"/>
    </location>
</feature>
<feature type="active site" description="Nucleophile" evidence="1">
    <location>
        <position position="86"/>
    </location>
</feature>
<feature type="active site" evidence="1">
    <location>
        <position position="173"/>
    </location>
</feature>
<feature type="active site" evidence="1">
    <location>
        <position position="175"/>
    </location>
</feature>
<feature type="binding site" evidence="1">
    <location>
        <begin position="227"/>
        <end position="233"/>
    </location>
    <ligand>
        <name>ATP</name>
        <dbReference type="ChEBI" id="CHEBI:30616"/>
    </ligand>
</feature>
<proteinExistence type="inferred from homology"/>
<name>GUAA_ALISL</name>